<dbReference type="EC" id="2.7.1.30" evidence="1"/>
<dbReference type="EMBL" id="BX571965">
    <property type="protein sequence ID" value="CAH34680.1"/>
    <property type="molecule type" value="Genomic_DNA"/>
</dbReference>
<dbReference type="RefSeq" id="WP_004556718.1">
    <property type="nucleotide sequence ID" value="NZ_CP009538.1"/>
</dbReference>
<dbReference type="RefSeq" id="YP_107316.1">
    <property type="nucleotide sequence ID" value="NC_006350.1"/>
</dbReference>
<dbReference type="SMR" id="Q63X50"/>
<dbReference type="STRING" id="272560.BPSL0687"/>
<dbReference type="GeneID" id="93059200"/>
<dbReference type="KEGG" id="bps:BPSL0687"/>
<dbReference type="PATRIC" id="fig|272560.51.peg.930"/>
<dbReference type="eggNOG" id="COG0554">
    <property type="taxonomic scope" value="Bacteria"/>
</dbReference>
<dbReference type="UniPathway" id="UPA00618">
    <property type="reaction ID" value="UER00672"/>
</dbReference>
<dbReference type="Proteomes" id="UP000000605">
    <property type="component" value="Chromosome 1"/>
</dbReference>
<dbReference type="GO" id="GO:0005829">
    <property type="term" value="C:cytosol"/>
    <property type="evidence" value="ECO:0007669"/>
    <property type="project" value="TreeGrafter"/>
</dbReference>
<dbReference type="GO" id="GO:0005524">
    <property type="term" value="F:ATP binding"/>
    <property type="evidence" value="ECO:0007669"/>
    <property type="project" value="UniProtKB-UniRule"/>
</dbReference>
<dbReference type="GO" id="GO:0004370">
    <property type="term" value="F:glycerol kinase activity"/>
    <property type="evidence" value="ECO:0000250"/>
    <property type="project" value="UniProtKB"/>
</dbReference>
<dbReference type="GO" id="GO:0019563">
    <property type="term" value="P:glycerol catabolic process"/>
    <property type="evidence" value="ECO:0007669"/>
    <property type="project" value="UniProtKB-UniRule"/>
</dbReference>
<dbReference type="GO" id="GO:0006071">
    <property type="term" value="P:glycerol metabolic process"/>
    <property type="evidence" value="ECO:0000250"/>
    <property type="project" value="UniProtKB"/>
</dbReference>
<dbReference type="GO" id="GO:0006072">
    <property type="term" value="P:glycerol-3-phosphate metabolic process"/>
    <property type="evidence" value="ECO:0007669"/>
    <property type="project" value="InterPro"/>
</dbReference>
<dbReference type="CDD" id="cd07786">
    <property type="entry name" value="FGGY_EcGK_like"/>
    <property type="match status" value="1"/>
</dbReference>
<dbReference type="FunFam" id="3.30.420.40:FF:000007">
    <property type="entry name" value="Glycerol kinase"/>
    <property type="match status" value="1"/>
</dbReference>
<dbReference type="FunFam" id="3.30.420.40:FF:000008">
    <property type="entry name" value="Glycerol kinase"/>
    <property type="match status" value="1"/>
</dbReference>
<dbReference type="Gene3D" id="3.30.420.40">
    <property type="match status" value="2"/>
</dbReference>
<dbReference type="HAMAP" id="MF_00186">
    <property type="entry name" value="Glycerol_kin"/>
    <property type="match status" value="1"/>
</dbReference>
<dbReference type="InterPro" id="IPR043129">
    <property type="entry name" value="ATPase_NBD"/>
</dbReference>
<dbReference type="InterPro" id="IPR000577">
    <property type="entry name" value="Carb_kinase_FGGY"/>
</dbReference>
<dbReference type="InterPro" id="IPR018483">
    <property type="entry name" value="Carb_kinase_FGGY_CS"/>
</dbReference>
<dbReference type="InterPro" id="IPR018485">
    <property type="entry name" value="FGGY_C"/>
</dbReference>
<dbReference type="InterPro" id="IPR018484">
    <property type="entry name" value="FGGY_N"/>
</dbReference>
<dbReference type="InterPro" id="IPR005999">
    <property type="entry name" value="Glycerol_kin"/>
</dbReference>
<dbReference type="NCBIfam" id="TIGR01311">
    <property type="entry name" value="glycerol_kin"/>
    <property type="match status" value="1"/>
</dbReference>
<dbReference type="NCBIfam" id="NF000756">
    <property type="entry name" value="PRK00047.1"/>
    <property type="match status" value="1"/>
</dbReference>
<dbReference type="PANTHER" id="PTHR10196:SF69">
    <property type="entry name" value="GLYCEROL KINASE"/>
    <property type="match status" value="1"/>
</dbReference>
<dbReference type="PANTHER" id="PTHR10196">
    <property type="entry name" value="SUGAR KINASE"/>
    <property type="match status" value="1"/>
</dbReference>
<dbReference type="Pfam" id="PF02782">
    <property type="entry name" value="FGGY_C"/>
    <property type="match status" value="1"/>
</dbReference>
<dbReference type="Pfam" id="PF00370">
    <property type="entry name" value="FGGY_N"/>
    <property type="match status" value="1"/>
</dbReference>
<dbReference type="PIRSF" id="PIRSF000538">
    <property type="entry name" value="GlpK"/>
    <property type="match status" value="1"/>
</dbReference>
<dbReference type="SUPFAM" id="SSF53067">
    <property type="entry name" value="Actin-like ATPase domain"/>
    <property type="match status" value="2"/>
</dbReference>
<dbReference type="PROSITE" id="PS00933">
    <property type="entry name" value="FGGY_KINASES_1"/>
    <property type="match status" value="1"/>
</dbReference>
<dbReference type="PROSITE" id="PS00445">
    <property type="entry name" value="FGGY_KINASES_2"/>
    <property type="match status" value="1"/>
</dbReference>
<proteinExistence type="inferred from homology"/>
<gene>
    <name evidence="1" type="primary">glpK</name>
    <name type="ordered locus">BPSL0687</name>
</gene>
<name>GLPK_BURPS</name>
<organism>
    <name type="scientific">Burkholderia pseudomallei (strain K96243)</name>
    <dbReference type="NCBI Taxonomy" id="272560"/>
    <lineage>
        <taxon>Bacteria</taxon>
        <taxon>Pseudomonadati</taxon>
        <taxon>Pseudomonadota</taxon>
        <taxon>Betaproteobacteria</taxon>
        <taxon>Burkholderiales</taxon>
        <taxon>Burkholderiaceae</taxon>
        <taxon>Burkholderia</taxon>
        <taxon>pseudomallei group</taxon>
    </lineage>
</organism>
<sequence>MQDQYILALDQGTTSSRAMLFDRQGNIVSIAQKEFEQIYPQPGWVEHDPQEIWSTQAGVAAEAVTRVGLNGTAIAAIGITNQRETTIVWDRETGHPIYNAIVWQDRRTADFCDKLKAQGLSEKVRAKTGLPIDSYFSATKIRWILDNVEGAREKARQGKLAFGTVDSWLVWNFTKHELHVTDVTNASRTMLFNIHTLDWDDELLDALEIPRSMLPQVRASSEIYGPTKTTVFASKIPLAGIAGDQQAALFGQMCTSSGMVKNTYGTGCFLMMNTGETPIESRNNLVTTIAWQVDGKVSYALEGSIFIAGAVVQWLRDGLGIIKSASEIEALAAGVPHTDGVYLVPAFAGLGAPHWNARARGSLFGVTRGTTSAHLARAALDSIAYQSLDVLKAMEADSGIRIGELRVDGGASANNLLMQFQADLLGVDAVRPRITETTALGAAYLAGLAIGYWQNVDELHSQWQLERRFAPSMQAEQVGSCLAGWQRAVRAAKAWADDTQ</sequence>
<reference key="1">
    <citation type="journal article" date="2004" name="Proc. Natl. Acad. Sci. U.S.A.">
        <title>Genomic plasticity of the causative agent of melioidosis, Burkholderia pseudomallei.</title>
        <authorList>
            <person name="Holden M.T.G."/>
            <person name="Titball R.W."/>
            <person name="Peacock S.J."/>
            <person name="Cerdeno-Tarraga A.-M."/>
            <person name="Atkins T."/>
            <person name="Crossman L.C."/>
            <person name="Pitt T."/>
            <person name="Churcher C."/>
            <person name="Mungall K.L."/>
            <person name="Bentley S.D."/>
            <person name="Sebaihia M."/>
            <person name="Thomson N.R."/>
            <person name="Bason N."/>
            <person name="Beacham I.R."/>
            <person name="Brooks K."/>
            <person name="Brown K.A."/>
            <person name="Brown N.F."/>
            <person name="Challis G.L."/>
            <person name="Cherevach I."/>
            <person name="Chillingworth T."/>
            <person name="Cronin A."/>
            <person name="Crossett B."/>
            <person name="Davis P."/>
            <person name="DeShazer D."/>
            <person name="Feltwell T."/>
            <person name="Fraser A."/>
            <person name="Hance Z."/>
            <person name="Hauser H."/>
            <person name="Holroyd S."/>
            <person name="Jagels K."/>
            <person name="Keith K.E."/>
            <person name="Maddison M."/>
            <person name="Moule S."/>
            <person name="Price C."/>
            <person name="Quail M.A."/>
            <person name="Rabbinowitsch E."/>
            <person name="Rutherford K."/>
            <person name="Sanders M."/>
            <person name="Simmonds M."/>
            <person name="Songsivilai S."/>
            <person name="Stevens K."/>
            <person name="Tumapa S."/>
            <person name="Vesaratchavest M."/>
            <person name="Whitehead S."/>
            <person name="Yeats C."/>
            <person name="Barrell B.G."/>
            <person name="Oyston P.C.F."/>
            <person name="Parkhill J."/>
        </authorList>
    </citation>
    <scope>NUCLEOTIDE SEQUENCE [LARGE SCALE GENOMIC DNA]</scope>
    <source>
        <strain>K96243</strain>
    </source>
</reference>
<feature type="chain" id="PRO_1000020712" description="Glycerol kinase">
    <location>
        <begin position="1"/>
        <end position="500"/>
    </location>
</feature>
<feature type="binding site" evidence="1">
    <location>
        <position position="13"/>
    </location>
    <ligand>
        <name>ADP</name>
        <dbReference type="ChEBI" id="CHEBI:456216"/>
    </ligand>
</feature>
<feature type="binding site" evidence="1">
    <location>
        <position position="13"/>
    </location>
    <ligand>
        <name>ATP</name>
        <dbReference type="ChEBI" id="CHEBI:30616"/>
    </ligand>
</feature>
<feature type="binding site" evidence="1">
    <location>
        <position position="13"/>
    </location>
    <ligand>
        <name>sn-glycerol 3-phosphate</name>
        <dbReference type="ChEBI" id="CHEBI:57597"/>
    </ligand>
</feature>
<feature type="binding site" evidence="1">
    <location>
        <position position="14"/>
    </location>
    <ligand>
        <name>ATP</name>
        <dbReference type="ChEBI" id="CHEBI:30616"/>
    </ligand>
</feature>
<feature type="binding site" evidence="1">
    <location>
        <position position="15"/>
    </location>
    <ligand>
        <name>ATP</name>
        <dbReference type="ChEBI" id="CHEBI:30616"/>
    </ligand>
</feature>
<feature type="binding site" evidence="1">
    <location>
        <position position="17"/>
    </location>
    <ligand>
        <name>ADP</name>
        <dbReference type="ChEBI" id="CHEBI:456216"/>
    </ligand>
</feature>
<feature type="binding site" evidence="1">
    <location>
        <position position="83"/>
    </location>
    <ligand>
        <name>glycerol</name>
        <dbReference type="ChEBI" id="CHEBI:17754"/>
    </ligand>
</feature>
<feature type="binding site" evidence="1">
    <location>
        <position position="83"/>
    </location>
    <ligand>
        <name>sn-glycerol 3-phosphate</name>
        <dbReference type="ChEBI" id="CHEBI:57597"/>
    </ligand>
</feature>
<feature type="binding site" evidence="1">
    <location>
        <position position="84"/>
    </location>
    <ligand>
        <name>glycerol</name>
        <dbReference type="ChEBI" id="CHEBI:17754"/>
    </ligand>
</feature>
<feature type="binding site" evidence="1">
    <location>
        <position position="84"/>
    </location>
    <ligand>
        <name>sn-glycerol 3-phosphate</name>
        <dbReference type="ChEBI" id="CHEBI:57597"/>
    </ligand>
</feature>
<feature type="binding site" evidence="1">
    <location>
        <position position="135"/>
    </location>
    <ligand>
        <name>glycerol</name>
        <dbReference type="ChEBI" id="CHEBI:17754"/>
    </ligand>
</feature>
<feature type="binding site" evidence="1">
    <location>
        <position position="135"/>
    </location>
    <ligand>
        <name>sn-glycerol 3-phosphate</name>
        <dbReference type="ChEBI" id="CHEBI:57597"/>
    </ligand>
</feature>
<feature type="binding site" evidence="1">
    <location>
        <position position="244"/>
    </location>
    <ligand>
        <name>glycerol</name>
        <dbReference type="ChEBI" id="CHEBI:17754"/>
    </ligand>
</feature>
<feature type="binding site" evidence="1">
    <location>
        <position position="244"/>
    </location>
    <ligand>
        <name>sn-glycerol 3-phosphate</name>
        <dbReference type="ChEBI" id="CHEBI:57597"/>
    </ligand>
</feature>
<feature type="binding site" evidence="1">
    <location>
        <position position="245"/>
    </location>
    <ligand>
        <name>glycerol</name>
        <dbReference type="ChEBI" id="CHEBI:17754"/>
    </ligand>
</feature>
<feature type="binding site" evidence="1">
    <location>
        <position position="266"/>
    </location>
    <ligand>
        <name>ADP</name>
        <dbReference type="ChEBI" id="CHEBI:456216"/>
    </ligand>
</feature>
<feature type="binding site" evidence="1">
    <location>
        <position position="266"/>
    </location>
    <ligand>
        <name>ATP</name>
        <dbReference type="ChEBI" id="CHEBI:30616"/>
    </ligand>
</feature>
<feature type="binding site" evidence="1">
    <location>
        <position position="309"/>
    </location>
    <ligand>
        <name>ADP</name>
        <dbReference type="ChEBI" id="CHEBI:456216"/>
    </ligand>
</feature>
<feature type="binding site" evidence="1">
    <location>
        <position position="309"/>
    </location>
    <ligand>
        <name>ATP</name>
        <dbReference type="ChEBI" id="CHEBI:30616"/>
    </ligand>
</feature>
<feature type="binding site" evidence="1">
    <location>
        <position position="313"/>
    </location>
    <ligand>
        <name>ATP</name>
        <dbReference type="ChEBI" id="CHEBI:30616"/>
    </ligand>
</feature>
<feature type="binding site" evidence="1">
    <location>
        <position position="410"/>
    </location>
    <ligand>
        <name>ADP</name>
        <dbReference type="ChEBI" id="CHEBI:456216"/>
    </ligand>
</feature>
<feature type="binding site" evidence="1">
    <location>
        <position position="410"/>
    </location>
    <ligand>
        <name>ATP</name>
        <dbReference type="ChEBI" id="CHEBI:30616"/>
    </ligand>
</feature>
<feature type="binding site" evidence="1">
    <location>
        <position position="414"/>
    </location>
    <ligand>
        <name>ADP</name>
        <dbReference type="ChEBI" id="CHEBI:456216"/>
    </ligand>
</feature>
<keyword id="KW-0067">ATP-binding</keyword>
<keyword id="KW-0319">Glycerol metabolism</keyword>
<keyword id="KW-0418">Kinase</keyword>
<keyword id="KW-0547">Nucleotide-binding</keyword>
<keyword id="KW-1185">Reference proteome</keyword>
<keyword id="KW-0808">Transferase</keyword>
<comment type="function">
    <text evidence="1">Key enzyme in the regulation of glycerol uptake and metabolism. Catalyzes the phosphorylation of glycerol to yield sn-glycerol 3-phosphate.</text>
</comment>
<comment type="catalytic activity">
    <reaction evidence="1">
        <text>glycerol + ATP = sn-glycerol 3-phosphate + ADP + H(+)</text>
        <dbReference type="Rhea" id="RHEA:21644"/>
        <dbReference type="ChEBI" id="CHEBI:15378"/>
        <dbReference type="ChEBI" id="CHEBI:17754"/>
        <dbReference type="ChEBI" id="CHEBI:30616"/>
        <dbReference type="ChEBI" id="CHEBI:57597"/>
        <dbReference type="ChEBI" id="CHEBI:456216"/>
        <dbReference type="EC" id="2.7.1.30"/>
    </reaction>
</comment>
<comment type="activity regulation">
    <text evidence="1">Inhibited by fructose 1,6-bisphosphate (FBP).</text>
</comment>
<comment type="pathway">
    <text evidence="1">Polyol metabolism; glycerol degradation via glycerol kinase pathway; sn-glycerol 3-phosphate from glycerol: step 1/1.</text>
</comment>
<comment type="similarity">
    <text evidence="1">Belongs to the FGGY kinase family.</text>
</comment>
<protein>
    <recommendedName>
        <fullName evidence="1">Glycerol kinase</fullName>
        <ecNumber evidence="1">2.7.1.30</ecNumber>
    </recommendedName>
    <alternativeName>
        <fullName evidence="1">ATP:glycerol 3-phosphotransferase</fullName>
    </alternativeName>
    <alternativeName>
        <fullName evidence="1">Glycerokinase</fullName>
        <shortName evidence="1">GK</shortName>
    </alternativeName>
</protein>
<accession>Q63X50</accession>
<evidence type="ECO:0000255" key="1">
    <source>
        <dbReference type="HAMAP-Rule" id="MF_00186"/>
    </source>
</evidence>